<evidence type="ECO:0000255" key="1">
    <source>
        <dbReference type="HAMAP-Rule" id="MF_01161"/>
    </source>
</evidence>
<reference key="1">
    <citation type="journal article" date="2003" name="Lancet">
        <title>Genome sequence of Vibrio parahaemolyticus: a pathogenic mechanism distinct from that of V. cholerae.</title>
        <authorList>
            <person name="Makino K."/>
            <person name="Oshima K."/>
            <person name="Kurokawa K."/>
            <person name="Yokoyama K."/>
            <person name="Uda T."/>
            <person name="Tagomori K."/>
            <person name="Iijima Y."/>
            <person name="Najima M."/>
            <person name="Nakano M."/>
            <person name="Yamashita A."/>
            <person name="Kubota Y."/>
            <person name="Kimura S."/>
            <person name="Yasunaga T."/>
            <person name="Honda T."/>
            <person name="Shinagawa H."/>
            <person name="Hattori M."/>
            <person name="Iida T."/>
        </authorList>
    </citation>
    <scope>NUCLEOTIDE SEQUENCE [LARGE SCALE GENOMIC DNA]</scope>
    <source>
        <strain>RIMD 2210633</strain>
    </source>
</reference>
<organism>
    <name type="scientific">Vibrio parahaemolyticus serotype O3:K6 (strain RIMD 2210633)</name>
    <dbReference type="NCBI Taxonomy" id="223926"/>
    <lineage>
        <taxon>Bacteria</taxon>
        <taxon>Pseudomonadati</taxon>
        <taxon>Pseudomonadota</taxon>
        <taxon>Gammaproteobacteria</taxon>
        <taxon>Vibrionales</taxon>
        <taxon>Vibrionaceae</taxon>
        <taxon>Vibrio</taxon>
    </lineage>
</organism>
<keyword id="KW-0067">ATP-binding</keyword>
<keyword id="KW-0963">Cytoplasm</keyword>
<keyword id="KW-0436">Ligase</keyword>
<keyword id="KW-0547">Nucleotide-binding</keyword>
<keyword id="KW-0819">tRNA processing</keyword>
<feature type="chain" id="PRO_0000181801" description="tRNA(Ile)-lysidine synthase">
    <location>
        <begin position="1"/>
        <end position="438"/>
    </location>
</feature>
<feature type="binding site" evidence="1">
    <location>
        <begin position="27"/>
        <end position="32"/>
    </location>
    <ligand>
        <name>ATP</name>
        <dbReference type="ChEBI" id="CHEBI:30616"/>
    </ligand>
</feature>
<gene>
    <name evidence="1" type="primary">tilS</name>
    <name type="ordered locus">VP2301</name>
</gene>
<accession>Q87MF4</accession>
<sequence length="438" mass="49826">MESLYQQFSHVLNTYYQPQTKVVVAFSGGVDSRLLLELLRRYREENSLSCHAVYVHHGLSENADIWADKCQVWAKQAGISCSVERVNLDTNSGESIELLAREARYEALARHINRGDLLLTGQHADDQVETFLLALKRGSGPKGLSSMAESMPFAGGTLVRPLLNTKREQIEATAKNIGLEWVEDESNQDTRYDRNFLRHRIVPELSERWPSIHQAVQRSASLCAQQEALLDELLGSVFARALQADLSLSIDELAIHSELAQARLIRMWLSKLNANMPSQTQLRLIWQEVALAQQDANPKLKLKQGEIRRFQNKLYWVTHRADVTSWQGHIQIDEPLILPESLGTLTLSSGSHQPNISLPSHPELLRVTFNPEGLSAHPTTRSRSRKLKKLFQEYNVPSWLRRQIPILMYKDQVVAVADLFVDQTFSGQDCELIWRKPL</sequence>
<proteinExistence type="inferred from homology"/>
<dbReference type="EC" id="6.3.4.19" evidence="1"/>
<dbReference type="EMBL" id="BA000031">
    <property type="protein sequence ID" value="BAC60564.1"/>
    <property type="molecule type" value="Genomic_DNA"/>
</dbReference>
<dbReference type="RefSeq" id="NP_798680.1">
    <property type="nucleotide sequence ID" value="NC_004603.1"/>
</dbReference>
<dbReference type="RefSeq" id="WP_005456735.1">
    <property type="nucleotide sequence ID" value="NC_004603.1"/>
</dbReference>
<dbReference type="SMR" id="Q87MF4"/>
<dbReference type="GeneID" id="1189814"/>
<dbReference type="KEGG" id="vpa:VP2301"/>
<dbReference type="PATRIC" id="fig|223926.6.peg.2203"/>
<dbReference type="eggNOG" id="COG0037">
    <property type="taxonomic scope" value="Bacteria"/>
</dbReference>
<dbReference type="HOGENOM" id="CLU_018869_2_0_6"/>
<dbReference type="Proteomes" id="UP000002493">
    <property type="component" value="Chromosome 1"/>
</dbReference>
<dbReference type="GO" id="GO:0005737">
    <property type="term" value="C:cytoplasm"/>
    <property type="evidence" value="ECO:0007669"/>
    <property type="project" value="UniProtKB-SubCell"/>
</dbReference>
<dbReference type="GO" id="GO:0005524">
    <property type="term" value="F:ATP binding"/>
    <property type="evidence" value="ECO:0007669"/>
    <property type="project" value="UniProtKB-UniRule"/>
</dbReference>
<dbReference type="GO" id="GO:0032267">
    <property type="term" value="F:tRNA(Ile)-lysidine synthase activity"/>
    <property type="evidence" value="ECO:0007669"/>
    <property type="project" value="UniProtKB-EC"/>
</dbReference>
<dbReference type="GO" id="GO:0006400">
    <property type="term" value="P:tRNA modification"/>
    <property type="evidence" value="ECO:0007669"/>
    <property type="project" value="UniProtKB-UniRule"/>
</dbReference>
<dbReference type="CDD" id="cd01992">
    <property type="entry name" value="TilS_N"/>
    <property type="match status" value="1"/>
</dbReference>
<dbReference type="Gene3D" id="1.20.59.20">
    <property type="match status" value="1"/>
</dbReference>
<dbReference type="Gene3D" id="3.40.50.620">
    <property type="entry name" value="HUPs"/>
    <property type="match status" value="1"/>
</dbReference>
<dbReference type="HAMAP" id="MF_01161">
    <property type="entry name" value="tRNA_Ile_lys_synt"/>
    <property type="match status" value="1"/>
</dbReference>
<dbReference type="InterPro" id="IPR012796">
    <property type="entry name" value="Lysidine-tRNA-synth_C"/>
</dbReference>
<dbReference type="InterPro" id="IPR014729">
    <property type="entry name" value="Rossmann-like_a/b/a_fold"/>
</dbReference>
<dbReference type="InterPro" id="IPR011063">
    <property type="entry name" value="TilS/TtcA_N"/>
</dbReference>
<dbReference type="InterPro" id="IPR012094">
    <property type="entry name" value="tRNA_Ile_lys_synt"/>
</dbReference>
<dbReference type="InterPro" id="IPR012795">
    <property type="entry name" value="tRNA_Ile_lys_synt_N"/>
</dbReference>
<dbReference type="InterPro" id="IPR015262">
    <property type="entry name" value="tRNA_Ile_lys_synt_subst-bd"/>
</dbReference>
<dbReference type="NCBIfam" id="TIGR02433">
    <property type="entry name" value="lysidine_TilS_C"/>
    <property type="match status" value="1"/>
</dbReference>
<dbReference type="NCBIfam" id="TIGR02432">
    <property type="entry name" value="lysidine_TilS_N"/>
    <property type="match status" value="1"/>
</dbReference>
<dbReference type="PANTHER" id="PTHR43033">
    <property type="entry name" value="TRNA(ILE)-LYSIDINE SYNTHASE-RELATED"/>
    <property type="match status" value="1"/>
</dbReference>
<dbReference type="PANTHER" id="PTHR43033:SF1">
    <property type="entry name" value="TRNA(ILE)-LYSIDINE SYNTHASE-RELATED"/>
    <property type="match status" value="1"/>
</dbReference>
<dbReference type="Pfam" id="PF01171">
    <property type="entry name" value="ATP_bind_3"/>
    <property type="match status" value="1"/>
</dbReference>
<dbReference type="Pfam" id="PF09179">
    <property type="entry name" value="TilS"/>
    <property type="match status" value="1"/>
</dbReference>
<dbReference type="Pfam" id="PF11734">
    <property type="entry name" value="TilS_C"/>
    <property type="match status" value="1"/>
</dbReference>
<dbReference type="SMART" id="SM00977">
    <property type="entry name" value="TilS_C"/>
    <property type="match status" value="1"/>
</dbReference>
<dbReference type="SUPFAM" id="SSF52402">
    <property type="entry name" value="Adenine nucleotide alpha hydrolases-like"/>
    <property type="match status" value="1"/>
</dbReference>
<dbReference type="SUPFAM" id="SSF82829">
    <property type="entry name" value="MesJ substrate recognition domain-like"/>
    <property type="match status" value="1"/>
</dbReference>
<dbReference type="SUPFAM" id="SSF56037">
    <property type="entry name" value="PheT/TilS domain"/>
    <property type="match status" value="1"/>
</dbReference>
<protein>
    <recommendedName>
        <fullName evidence="1">tRNA(Ile)-lysidine synthase</fullName>
        <ecNumber evidence="1">6.3.4.19</ecNumber>
    </recommendedName>
    <alternativeName>
        <fullName evidence="1">tRNA(Ile)-2-lysyl-cytidine synthase</fullName>
    </alternativeName>
    <alternativeName>
        <fullName evidence="1">tRNA(Ile)-lysidine synthetase</fullName>
    </alternativeName>
</protein>
<name>TILS_VIBPA</name>
<comment type="function">
    <text evidence="1">Ligates lysine onto the cytidine present at position 34 of the AUA codon-specific tRNA(Ile) that contains the anticodon CAU, in an ATP-dependent manner. Cytidine is converted to lysidine, thus changing the amino acid specificity of the tRNA from methionine to isoleucine.</text>
</comment>
<comment type="catalytic activity">
    <reaction evidence="1">
        <text>cytidine(34) in tRNA(Ile2) + L-lysine + ATP = lysidine(34) in tRNA(Ile2) + AMP + diphosphate + H(+)</text>
        <dbReference type="Rhea" id="RHEA:43744"/>
        <dbReference type="Rhea" id="RHEA-COMP:10625"/>
        <dbReference type="Rhea" id="RHEA-COMP:10670"/>
        <dbReference type="ChEBI" id="CHEBI:15378"/>
        <dbReference type="ChEBI" id="CHEBI:30616"/>
        <dbReference type="ChEBI" id="CHEBI:32551"/>
        <dbReference type="ChEBI" id="CHEBI:33019"/>
        <dbReference type="ChEBI" id="CHEBI:82748"/>
        <dbReference type="ChEBI" id="CHEBI:83665"/>
        <dbReference type="ChEBI" id="CHEBI:456215"/>
        <dbReference type="EC" id="6.3.4.19"/>
    </reaction>
</comment>
<comment type="subcellular location">
    <subcellularLocation>
        <location evidence="1">Cytoplasm</location>
    </subcellularLocation>
</comment>
<comment type="domain">
    <text>The N-terminal region contains the highly conserved SGGXDS motif, predicted to be a P-loop motif involved in ATP binding.</text>
</comment>
<comment type="similarity">
    <text evidence="1">Belongs to the tRNA(Ile)-lysidine synthase family.</text>
</comment>